<organism>
    <name type="scientific">Schizosaccharomyces pombe (strain 972 / ATCC 24843)</name>
    <name type="common">Fission yeast</name>
    <dbReference type="NCBI Taxonomy" id="284812"/>
    <lineage>
        <taxon>Eukaryota</taxon>
        <taxon>Fungi</taxon>
        <taxon>Dikarya</taxon>
        <taxon>Ascomycota</taxon>
        <taxon>Taphrinomycotina</taxon>
        <taxon>Schizosaccharomycetes</taxon>
        <taxon>Schizosaccharomycetales</taxon>
        <taxon>Schizosaccharomycetaceae</taxon>
        <taxon>Schizosaccharomyces</taxon>
    </lineage>
</organism>
<evidence type="ECO:0000250" key="1">
    <source>
        <dbReference type="UniProtKB" id="P46965"/>
    </source>
</evidence>
<evidence type="ECO:0000250" key="2">
    <source>
        <dbReference type="UniProtKB" id="P67812"/>
    </source>
</evidence>
<evidence type="ECO:0000255" key="3"/>
<evidence type="ECO:0000305" key="4"/>
<evidence type="ECO:0000312" key="5">
    <source>
        <dbReference type="PomBase" id="SPBC887.22"/>
    </source>
</evidence>
<dbReference type="EMBL" id="CU329671">
    <property type="protein sequence ID" value="CCD31381.1"/>
    <property type="molecule type" value="Genomic_DNA"/>
</dbReference>
<dbReference type="RefSeq" id="XP_004001729.1">
    <property type="nucleotide sequence ID" value="XM_004001680.1"/>
</dbReference>
<dbReference type="SMR" id="G2TRR4"/>
<dbReference type="BioGRID" id="4254067">
    <property type="interactions" value="3"/>
</dbReference>
<dbReference type="FunCoup" id="G2TRR4">
    <property type="interactions" value="80"/>
</dbReference>
<dbReference type="STRING" id="284812.G2TRR4"/>
<dbReference type="PaxDb" id="4896-SPBC887.22.1"/>
<dbReference type="EnsemblFungi" id="SPBC887.22.1">
    <property type="protein sequence ID" value="SPBC887.22.1:pep"/>
    <property type="gene ID" value="SPBC887.22"/>
</dbReference>
<dbReference type="PomBase" id="SPBC887.22">
    <property type="gene designation" value="spc1"/>
</dbReference>
<dbReference type="VEuPathDB" id="FungiDB:SPBC887.22"/>
<dbReference type="HOGENOM" id="CLU_134505_2_1_1"/>
<dbReference type="InParanoid" id="G2TRR4"/>
<dbReference type="OMA" id="CIPAWPM"/>
<dbReference type="PRO" id="PR:G2TRR4"/>
<dbReference type="Proteomes" id="UP000002485">
    <property type="component" value="Chromosome II"/>
</dbReference>
<dbReference type="GO" id="GO:0005787">
    <property type="term" value="C:signal peptidase complex"/>
    <property type="evidence" value="ECO:0000318"/>
    <property type="project" value="GO_Central"/>
</dbReference>
<dbReference type="GO" id="GO:0045047">
    <property type="term" value="P:protein targeting to ER"/>
    <property type="evidence" value="ECO:0000318"/>
    <property type="project" value="GO_Central"/>
</dbReference>
<dbReference type="GO" id="GO:0006465">
    <property type="term" value="P:signal peptide processing"/>
    <property type="evidence" value="ECO:0000318"/>
    <property type="project" value="GO_Central"/>
</dbReference>
<dbReference type="InterPro" id="IPR009542">
    <property type="entry name" value="Spc1/SPCS1"/>
</dbReference>
<dbReference type="PANTHER" id="PTHR13202">
    <property type="entry name" value="MICROSOMAL SIGNAL PEPTIDASE 12 KDA SUBUNIT"/>
    <property type="match status" value="1"/>
</dbReference>
<dbReference type="PANTHER" id="PTHR13202:SF0">
    <property type="entry name" value="SIGNAL PEPTIDASE COMPLEX SUBUNIT 1"/>
    <property type="match status" value="1"/>
</dbReference>
<dbReference type="Pfam" id="PF06645">
    <property type="entry name" value="SPC12"/>
    <property type="match status" value="1"/>
</dbReference>
<feature type="chain" id="PRO_0000416499" description="Signal peptidase complex subunit 1">
    <location>
        <begin position="1"/>
        <end position="78"/>
    </location>
</feature>
<feature type="topological domain" description="Cytoplasmic" evidence="3">
    <location>
        <begin position="1"/>
        <end position="18"/>
    </location>
</feature>
<feature type="transmembrane region" description="Helical" evidence="3">
    <location>
        <begin position="19"/>
        <end position="38"/>
    </location>
</feature>
<feature type="topological domain" description="Lumenal" evidence="3">
    <location>
        <begin position="39"/>
        <end position="42"/>
    </location>
</feature>
<feature type="transmembrane region" description="Helical" evidence="3">
    <location>
        <begin position="43"/>
        <end position="63"/>
    </location>
</feature>
<feature type="topological domain" description="Cytoplasmic" evidence="3">
    <location>
        <begin position="64"/>
        <end position="78"/>
    </location>
</feature>
<sequence>MNYLEGTIDFAGQLRCQKYMNYGLCTSAVISYIYGYLVQDSYCVIKLFLILASLVALVCLPAWSMYNKNPLKFQKKKE</sequence>
<protein>
    <recommendedName>
        <fullName>Signal peptidase complex subunit 1</fullName>
    </recommendedName>
</protein>
<proteinExistence type="evidence at transcript level"/>
<keyword id="KW-0256">Endoplasmic reticulum</keyword>
<keyword id="KW-0472">Membrane</keyword>
<keyword id="KW-1185">Reference proteome</keyword>
<keyword id="KW-0812">Transmembrane</keyword>
<keyword id="KW-1133">Transmembrane helix</keyword>
<gene>
    <name evidence="5" type="primary">spc1</name>
    <name evidence="5" type="synonym">new19</name>
    <name type="ORF">SPBC887.22</name>
</gene>
<comment type="function">
    <text evidence="1">Component of the signal peptidase complex (SPC) which catalyzes the cleavage of N-terminal signal sequences from nascent proteins as they are translocated into the lumen of the endoplasmic reticulum. Dispensable for SPC enzymatic activity.</text>
</comment>
<comment type="subunit">
    <text evidence="1 2">Component of the signal peptidase complex (SPC) composed of a catalytic subunit sec11 and three accessory subunits spc1, spc2 and spc3 (By similarity). The complex induces a local thinning of the ER membrane which is used to measure the length of the signal peptide (SP) h-region of protein substrates. This ensures the selectivity of the complex towards h-regions shorter than 18-20 amino acids (By similarity). SPC associates with the translocon complex (By similarity).</text>
</comment>
<comment type="subcellular location">
    <subcellularLocation>
        <location evidence="1">Endoplasmic reticulum membrane</location>
        <topology evidence="3">Multi-pass membrane protein</topology>
    </subcellularLocation>
</comment>
<comment type="similarity">
    <text evidence="4">Belongs to the SPCS1 family.</text>
</comment>
<reference key="1">
    <citation type="journal article" date="2002" name="Nature">
        <title>The genome sequence of Schizosaccharomyces pombe.</title>
        <authorList>
            <person name="Wood V."/>
            <person name="Gwilliam R."/>
            <person name="Rajandream M.A."/>
            <person name="Lyne M.H."/>
            <person name="Lyne R."/>
            <person name="Stewart A."/>
            <person name="Sgouros J.G."/>
            <person name="Peat N."/>
            <person name="Hayles J."/>
            <person name="Baker S.G."/>
            <person name="Basham D."/>
            <person name="Bowman S."/>
            <person name="Brooks K."/>
            <person name="Brown D."/>
            <person name="Brown S."/>
            <person name="Chillingworth T."/>
            <person name="Churcher C.M."/>
            <person name="Collins M."/>
            <person name="Connor R."/>
            <person name="Cronin A."/>
            <person name="Davis P."/>
            <person name="Feltwell T."/>
            <person name="Fraser A."/>
            <person name="Gentles S."/>
            <person name="Goble A."/>
            <person name="Hamlin N."/>
            <person name="Harris D.E."/>
            <person name="Hidalgo J."/>
            <person name="Hodgson G."/>
            <person name="Holroyd S."/>
            <person name="Hornsby T."/>
            <person name="Howarth S."/>
            <person name="Huckle E.J."/>
            <person name="Hunt S."/>
            <person name="Jagels K."/>
            <person name="James K.D."/>
            <person name="Jones L."/>
            <person name="Jones M."/>
            <person name="Leather S."/>
            <person name="McDonald S."/>
            <person name="McLean J."/>
            <person name="Mooney P."/>
            <person name="Moule S."/>
            <person name="Mungall K.L."/>
            <person name="Murphy L.D."/>
            <person name="Niblett D."/>
            <person name="Odell C."/>
            <person name="Oliver K."/>
            <person name="O'Neil S."/>
            <person name="Pearson D."/>
            <person name="Quail M.A."/>
            <person name="Rabbinowitsch E."/>
            <person name="Rutherford K.M."/>
            <person name="Rutter S."/>
            <person name="Saunders D."/>
            <person name="Seeger K."/>
            <person name="Sharp S."/>
            <person name="Skelton J."/>
            <person name="Simmonds M.N."/>
            <person name="Squares R."/>
            <person name="Squares S."/>
            <person name="Stevens K."/>
            <person name="Taylor K."/>
            <person name="Taylor R.G."/>
            <person name="Tivey A."/>
            <person name="Walsh S.V."/>
            <person name="Warren T."/>
            <person name="Whitehead S."/>
            <person name="Woodward J.R."/>
            <person name="Volckaert G."/>
            <person name="Aert R."/>
            <person name="Robben J."/>
            <person name="Grymonprez B."/>
            <person name="Weltjens I."/>
            <person name="Vanstreels E."/>
            <person name="Rieger M."/>
            <person name="Schaefer M."/>
            <person name="Mueller-Auer S."/>
            <person name="Gabel C."/>
            <person name="Fuchs M."/>
            <person name="Duesterhoeft A."/>
            <person name="Fritzc C."/>
            <person name="Holzer E."/>
            <person name="Moestl D."/>
            <person name="Hilbert H."/>
            <person name="Borzym K."/>
            <person name="Langer I."/>
            <person name="Beck A."/>
            <person name="Lehrach H."/>
            <person name="Reinhardt R."/>
            <person name="Pohl T.M."/>
            <person name="Eger P."/>
            <person name="Zimmermann W."/>
            <person name="Wedler H."/>
            <person name="Wambutt R."/>
            <person name="Purnelle B."/>
            <person name="Goffeau A."/>
            <person name="Cadieu E."/>
            <person name="Dreano S."/>
            <person name="Gloux S."/>
            <person name="Lelaure V."/>
            <person name="Mottier S."/>
            <person name="Galibert F."/>
            <person name="Aves S.J."/>
            <person name="Xiang Z."/>
            <person name="Hunt C."/>
            <person name="Moore K."/>
            <person name="Hurst S.M."/>
            <person name="Lucas M."/>
            <person name="Rochet M."/>
            <person name="Gaillardin C."/>
            <person name="Tallada V.A."/>
            <person name="Garzon A."/>
            <person name="Thode G."/>
            <person name="Daga R.R."/>
            <person name="Cruzado L."/>
            <person name="Jimenez J."/>
            <person name="Sanchez M."/>
            <person name="del Rey F."/>
            <person name="Benito J."/>
            <person name="Dominguez A."/>
            <person name="Revuelta J.L."/>
            <person name="Moreno S."/>
            <person name="Armstrong J."/>
            <person name="Forsburg S.L."/>
            <person name="Cerutti L."/>
            <person name="Lowe T."/>
            <person name="McCombie W.R."/>
            <person name="Paulsen I."/>
            <person name="Potashkin J."/>
            <person name="Shpakovski G.V."/>
            <person name="Ussery D."/>
            <person name="Barrell B.G."/>
            <person name="Nurse P."/>
        </authorList>
    </citation>
    <scope>NUCLEOTIDE SEQUENCE [LARGE SCALE GENOMIC DNA]</scope>
    <source>
        <strain>972 / ATCC 24843</strain>
    </source>
</reference>
<reference key="2">
    <citation type="journal article" date="2011" name="Genetics">
        <title>Augmented annotation of the Schizosaccharomyces pombe genome reveals additional genes required for growth and viability.</title>
        <authorList>
            <person name="Bitton D.A."/>
            <person name="Wood V."/>
            <person name="Scutt P.J."/>
            <person name="Grallert A."/>
            <person name="Yates T."/>
            <person name="Smith D.L."/>
            <person name="Hagan I.M."/>
            <person name="Miller C.J."/>
        </authorList>
    </citation>
    <scope>IDENTIFICATION</scope>
</reference>
<name>SPC1_SCHPO</name>
<accession>G2TRR4</accession>